<feature type="chain" id="PRO_0000248813" description="Proline--tRNA ligase">
    <location>
        <begin position="1"/>
        <end position="561"/>
    </location>
</feature>
<keyword id="KW-0030">Aminoacyl-tRNA synthetase</keyword>
<keyword id="KW-0067">ATP-binding</keyword>
<keyword id="KW-0963">Cytoplasm</keyword>
<keyword id="KW-0436">Ligase</keyword>
<keyword id="KW-0547">Nucleotide-binding</keyword>
<keyword id="KW-0648">Protein biosynthesis</keyword>
<keyword id="KW-1185">Reference proteome</keyword>
<accession>Q8D1V9</accession>
<reference key="1">
    <citation type="journal article" date="2002" name="Nat. Genet.">
        <title>Genome sequence of the endocellular obligate symbiont of tsetse flies, Wigglesworthia glossinidia.</title>
        <authorList>
            <person name="Akman L."/>
            <person name="Yamashita A."/>
            <person name="Watanabe H."/>
            <person name="Oshima K."/>
            <person name="Shiba T."/>
            <person name="Hattori M."/>
            <person name="Aksoy S."/>
        </authorList>
    </citation>
    <scope>NUCLEOTIDE SEQUENCE [LARGE SCALE GENOMIC DNA]</scope>
</reference>
<dbReference type="EC" id="6.1.1.15" evidence="1"/>
<dbReference type="EMBL" id="BA000021">
    <property type="protein sequence ID" value="BAC24743.1"/>
    <property type="molecule type" value="Genomic_DNA"/>
</dbReference>
<dbReference type="SMR" id="Q8D1V9"/>
<dbReference type="STRING" id="36870.gene:10369111"/>
<dbReference type="KEGG" id="wbr:proS"/>
<dbReference type="eggNOG" id="COG0442">
    <property type="taxonomic scope" value="Bacteria"/>
</dbReference>
<dbReference type="HOGENOM" id="CLU_016739_0_0_6"/>
<dbReference type="OrthoDB" id="9809052at2"/>
<dbReference type="Proteomes" id="UP000000562">
    <property type="component" value="Chromosome"/>
</dbReference>
<dbReference type="GO" id="GO:0005829">
    <property type="term" value="C:cytosol"/>
    <property type="evidence" value="ECO:0007669"/>
    <property type="project" value="TreeGrafter"/>
</dbReference>
<dbReference type="GO" id="GO:0002161">
    <property type="term" value="F:aminoacyl-tRNA deacylase activity"/>
    <property type="evidence" value="ECO:0007669"/>
    <property type="project" value="InterPro"/>
</dbReference>
<dbReference type="GO" id="GO:0005524">
    <property type="term" value="F:ATP binding"/>
    <property type="evidence" value="ECO:0007669"/>
    <property type="project" value="UniProtKB-UniRule"/>
</dbReference>
<dbReference type="GO" id="GO:0004827">
    <property type="term" value="F:proline-tRNA ligase activity"/>
    <property type="evidence" value="ECO:0007669"/>
    <property type="project" value="UniProtKB-UniRule"/>
</dbReference>
<dbReference type="GO" id="GO:0006433">
    <property type="term" value="P:prolyl-tRNA aminoacylation"/>
    <property type="evidence" value="ECO:0007669"/>
    <property type="project" value="UniProtKB-UniRule"/>
</dbReference>
<dbReference type="CDD" id="cd00861">
    <property type="entry name" value="ProRS_anticodon_short"/>
    <property type="match status" value="1"/>
</dbReference>
<dbReference type="CDD" id="cd00779">
    <property type="entry name" value="ProRS_core_prok"/>
    <property type="match status" value="1"/>
</dbReference>
<dbReference type="Gene3D" id="3.40.50.800">
    <property type="entry name" value="Anticodon-binding domain"/>
    <property type="match status" value="1"/>
</dbReference>
<dbReference type="Gene3D" id="3.30.930.10">
    <property type="entry name" value="Bira Bifunctional Protein, Domain 2"/>
    <property type="match status" value="1"/>
</dbReference>
<dbReference type="Gene3D" id="3.90.960.10">
    <property type="entry name" value="YbaK/aminoacyl-tRNA synthetase-associated domain"/>
    <property type="match status" value="1"/>
</dbReference>
<dbReference type="HAMAP" id="MF_01569">
    <property type="entry name" value="Pro_tRNA_synth_type1"/>
    <property type="match status" value="1"/>
</dbReference>
<dbReference type="InterPro" id="IPR002314">
    <property type="entry name" value="aa-tRNA-synt_IIb"/>
</dbReference>
<dbReference type="InterPro" id="IPR006195">
    <property type="entry name" value="aa-tRNA-synth_II"/>
</dbReference>
<dbReference type="InterPro" id="IPR045864">
    <property type="entry name" value="aa-tRNA-synth_II/BPL/LPL"/>
</dbReference>
<dbReference type="InterPro" id="IPR004154">
    <property type="entry name" value="Anticodon-bd"/>
</dbReference>
<dbReference type="InterPro" id="IPR036621">
    <property type="entry name" value="Anticodon-bd_dom_sf"/>
</dbReference>
<dbReference type="InterPro" id="IPR002316">
    <property type="entry name" value="Pro-tRNA-ligase_IIa"/>
</dbReference>
<dbReference type="InterPro" id="IPR004500">
    <property type="entry name" value="Pro-tRNA-synth_IIa_bac-type"/>
</dbReference>
<dbReference type="InterPro" id="IPR023717">
    <property type="entry name" value="Pro-tRNA-Synthase_IIa_type1"/>
</dbReference>
<dbReference type="InterPro" id="IPR050062">
    <property type="entry name" value="Pro-tRNA_synthetase"/>
</dbReference>
<dbReference type="InterPro" id="IPR044140">
    <property type="entry name" value="ProRS_anticodon_short"/>
</dbReference>
<dbReference type="InterPro" id="IPR033730">
    <property type="entry name" value="ProRS_core_prok"/>
</dbReference>
<dbReference type="InterPro" id="IPR036754">
    <property type="entry name" value="YbaK/aa-tRNA-synt-asso_dom_sf"/>
</dbReference>
<dbReference type="InterPro" id="IPR007214">
    <property type="entry name" value="YbaK/aa-tRNA-synth-assoc-dom"/>
</dbReference>
<dbReference type="NCBIfam" id="NF006625">
    <property type="entry name" value="PRK09194.1"/>
    <property type="match status" value="1"/>
</dbReference>
<dbReference type="NCBIfam" id="TIGR00409">
    <property type="entry name" value="proS_fam_II"/>
    <property type="match status" value="1"/>
</dbReference>
<dbReference type="PANTHER" id="PTHR42753">
    <property type="entry name" value="MITOCHONDRIAL RIBOSOME PROTEIN L39/PROLYL-TRNA LIGASE FAMILY MEMBER"/>
    <property type="match status" value="1"/>
</dbReference>
<dbReference type="PANTHER" id="PTHR42753:SF2">
    <property type="entry name" value="PROLINE--TRNA LIGASE"/>
    <property type="match status" value="1"/>
</dbReference>
<dbReference type="Pfam" id="PF03129">
    <property type="entry name" value="HGTP_anticodon"/>
    <property type="match status" value="1"/>
</dbReference>
<dbReference type="Pfam" id="PF00587">
    <property type="entry name" value="tRNA-synt_2b"/>
    <property type="match status" value="1"/>
</dbReference>
<dbReference type="Pfam" id="PF04073">
    <property type="entry name" value="tRNA_edit"/>
    <property type="match status" value="1"/>
</dbReference>
<dbReference type="PRINTS" id="PR01046">
    <property type="entry name" value="TRNASYNTHPRO"/>
</dbReference>
<dbReference type="SUPFAM" id="SSF52954">
    <property type="entry name" value="Class II aaRS ABD-related"/>
    <property type="match status" value="1"/>
</dbReference>
<dbReference type="SUPFAM" id="SSF55681">
    <property type="entry name" value="Class II aaRS and biotin synthetases"/>
    <property type="match status" value="1"/>
</dbReference>
<dbReference type="SUPFAM" id="SSF55826">
    <property type="entry name" value="YbaK/ProRS associated domain"/>
    <property type="match status" value="1"/>
</dbReference>
<dbReference type="PROSITE" id="PS50862">
    <property type="entry name" value="AA_TRNA_LIGASE_II"/>
    <property type="match status" value="1"/>
</dbReference>
<gene>
    <name evidence="1" type="primary">proS</name>
    <name type="ordered locus">WIGBR5970</name>
</gene>
<evidence type="ECO:0000255" key="1">
    <source>
        <dbReference type="HAMAP-Rule" id="MF_01569"/>
    </source>
</evidence>
<organism>
    <name type="scientific">Wigglesworthia glossinidia brevipalpis</name>
    <dbReference type="NCBI Taxonomy" id="36870"/>
    <lineage>
        <taxon>Bacteria</taxon>
        <taxon>Pseudomonadati</taxon>
        <taxon>Pseudomonadota</taxon>
        <taxon>Gammaproteobacteria</taxon>
        <taxon>Enterobacterales</taxon>
        <taxon>Erwiniaceae</taxon>
        <taxon>Wigglesworthia</taxon>
    </lineage>
</organism>
<proteinExistence type="inferred from homology"/>
<name>SYP_WIGBR</name>
<sequence>MRTSQYYLATLKDSPSETEGISHRLMIRSGMIRKLSSGLYAWLPTGFRVLKKIENIIRHEMNKIGAIEILMPIIQPSLIWKNSGRYEEYGLELLKFYDRKKKQFVLAPTHEEVISKIILKEINFNKVFPINFYQIYSKFRDEARPRCGTMRSKEFVMKDSYSFHLNEKSLEKTYHIMQETYKKIFNRLNLDYFVIRAKTGKIGGFISHEFHAYYNKSDVLINSYKKIFDKNNIINKFKKKIEIKNLIEINAEDILLTSDLAKKFNIDIKQIIKILLVHSIEKNHPFIAIAIREDHEIDLQKVENLNQVKKPLKFANYYEINKYFKVKKSYLGPVNIKCLLIVDKEAHCIKNFVSGANINNKYFFNINWDRDVVSYLVYDLKLCRKKYNNKKNNNSIEIGHIFQLGDKYSKPLNYSLLKDYNKKKIFMGCYGIGISRLVSTYIEQNYDSNGIIWNEEIAPFKVAIIPININFSIKVKNFSEEIYYKLCNLKIDVLFYDNVERPGIMFSNIELIGIPHILIISDKNLKNSIIEYKNRITGDKLMINYKYIFDFLLQFNINFNF</sequence>
<protein>
    <recommendedName>
        <fullName evidence="1">Proline--tRNA ligase</fullName>
        <ecNumber evidence="1">6.1.1.15</ecNumber>
    </recommendedName>
    <alternativeName>
        <fullName evidence="1">Prolyl-tRNA synthetase</fullName>
        <shortName evidence="1">ProRS</shortName>
    </alternativeName>
</protein>
<comment type="function">
    <text evidence="1">Catalyzes the attachment of proline to tRNA(Pro) in a two-step reaction: proline is first activated by ATP to form Pro-AMP and then transferred to the acceptor end of tRNA(Pro). As ProRS can inadvertently accommodate and process non-cognate amino acids such as alanine and cysteine, to avoid such errors it has two additional distinct editing activities against alanine. One activity is designated as 'pretransfer' editing and involves the tRNA(Pro)-independent hydrolysis of activated Ala-AMP. The other activity is designated 'posttransfer' editing and involves deacylation of mischarged Ala-tRNA(Pro). The misacylated Cys-tRNA(Pro) is not edited by ProRS.</text>
</comment>
<comment type="catalytic activity">
    <reaction evidence="1">
        <text>tRNA(Pro) + L-proline + ATP = L-prolyl-tRNA(Pro) + AMP + diphosphate</text>
        <dbReference type="Rhea" id="RHEA:14305"/>
        <dbReference type="Rhea" id="RHEA-COMP:9700"/>
        <dbReference type="Rhea" id="RHEA-COMP:9702"/>
        <dbReference type="ChEBI" id="CHEBI:30616"/>
        <dbReference type="ChEBI" id="CHEBI:33019"/>
        <dbReference type="ChEBI" id="CHEBI:60039"/>
        <dbReference type="ChEBI" id="CHEBI:78442"/>
        <dbReference type="ChEBI" id="CHEBI:78532"/>
        <dbReference type="ChEBI" id="CHEBI:456215"/>
        <dbReference type="EC" id="6.1.1.15"/>
    </reaction>
</comment>
<comment type="subunit">
    <text evidence="1">Homodimer.</text>
</comment>
<comment type="subcellular location">
    <subcellularLocation>
        <location evidence="1">Cytoplasm</location>
    </subcellularLocation>
</comment>
<comment type="domain">
    <text evidence="1">Consists of three domains: the N-terminal catalytic domain, the editing domain and the C-terminal anticodon-binding domain.</text>
</comment>
<comment type="similarity">
    <text evidence="1">Belongs to the class-II aminoacyl-tRNA synthetase family. ProS type 1 subfamily.</text>
</comment>